<name>GLGC_NITEU</name>
<comment type="function">
    <text evidence="1">Involved in the biosynthesis of ADP-glucose, a building block required for the elongation reactions to produce glycogen. Catalyzes the reaction between ATP and alpha-D-glucose 1-phosphate (G1P) to produce pyrophosphate and ADP-Glc.</text>
</comment>
<comment type="catalytic activity">
    <reaction evidence="1">
        <text>alpha-D-glucose 1-phosphate + ATP + H(+) = ADP-alpha-D-glucose + diphosphate</text>
        <dbReference type="Rhea" id="RHEA:12120"/>
        <dbReference type="ChEBI" id="CHEBI:15378"/>
        <dbReference type="ChEBI" id="CHEBI:30616"/>
        <dbReference type="ChEBI" id="CHEBI:33019"/>
        <dbReference type="ChEBI" id="CHEBI:57498"/>
        <dbReference type="ChEBI" id="CHEBI:58601"/>
        <dbReference type="EC" id="2.7.7.27"/>
    </reaction>
</comment>
<comment type="pathway">
    <text evidence="1">Glycan biosynthesis; glycogen biosynthesis.</text>
</comment>
<comment type="subunit">
    <text evidence="1">Homotetramer.</text>
</comment>
<comment type="similarity">
    <text evidence="1">Belongs to the bacterial/plant glucose-1-phosphate adenylyltransferase family.</text>
</comment>
<feature type="chain" id="PRO_0000195311" description="Glucose-1-phosphate adenylyltransferase">
    <location>
        <begin position="1"/>
        <end position="433"/>
    </location>
</feature>
<feature type="binding site" evidence="1">
    <location>
        <position position="117"/>
    </location>
    <ligand>
        <name>alpha-D-glucose 1-phosphate</name>
        <dbReference type="ChEBI" id="CHEBI:58601"/>
    </ligand>
</feature>
<feature type="binding site" evidence="1">
    <location>
        <position position="182"/>
    </location>
    <ligand>
        <name>alpha-D-glucose 1-phosphate</name>
        <dbReference type="ChEBI" id="CHEBI:58601"/>
    </ligand>
</feature>
<feature type="binding site" evidence="1">
    <location>
        <begin position="197"/>
        <end position="198"/>
    </location>
    <ligand>
        <name>alpha-D-glucose 1-phosphate</name>
        <dbReference type="ChEBI" id="CHEBI:58601"/>
    </ligand>
</feature>
<feature type="binding site" evidence="1">
    <location>
        <position position="215"/>
    </location>
    <ligand>
        <name>alpha-D-glucose 1-phosphate</name>
        <dbReference type="ChEBI" id="CHEBI:58601"/>
    </ligand>
</feature>
<gene>
    <name evidence="1" type="primary">glgC</name>
    <name type="ordered locus">NE2030</name>
</gene>
<protein>
    <recommendedName>
        <fullName evidence="1">Glucose-1-phosphate adenylyltransferase</fullName>
        <ecNumber evidence="1">2.7.7.27</ecNumber>
    </recommendedName>
    <alternativeName>
        <fullName evidence="1">ADP-glucose pyrophosphorylase</fullName>
        <shortName evidence="1">ADPGlc PPase</shortName>
    </alternativeName>
    <alternativeName>
        <fullName evidence="1">ADP-glucose synthase</fullName>
    </alternativeName>
</protein>
<dbReference type="EC" id="2.7.7.27" evidence="1"/>
<dbReference type="EMBL" id="AL954747">
    <property type="protein sequence ID" value="CAD85941.1"/>
    <property type="molecule type" value="Genomic_DNA"/>
</dbReference>
<dbReference type="RefSeq" id="WP_011112546.1">
    <property type="nucleotide sequence ID" value="NC_004757.1"/>
</dbReference>
<dbReference type="SMR" id="Q82T88"/>
<dbReference type="STRING" id="228410.NE2030"/>
<dbReference type="GeneID" id="87105168"/>
<dbReference type="KEGG" id="neu:NE2030"/>
<dbReference type="eggNOG" id="COG0448">
    <property type="taxonomic scope" value="Bacteria"/>
</dbReference>
<dbReference type="HOGENOM" id="CLU_029499_14_1_4"/>
<dbReference type="OrthoDB" id="9801810at2"/>
<dbReference type="PhylomeDB" id="Q82T88"/>
<dbReference type="BRENDA" id="2.7.7.27">
    <property type="organism ID" value="3654"/>
</dbReference>
<dbReference type="UniPathway" id="UPA00164"/>
<dbReference type="Proteomes" id="UP000001416">
    <property type="component" value="Chromosome"/>
</dbReference>
<dbReference type="GO" id="GO:0005524">
    <property type="term" value="F:ATP binding"/>
    <property type="evidence" value="ECO:0007669"/>
    <property type="project" value="UniProtKB-KW"/>
</dbReference>
<dbReference type="GO" id="GO:0008878">
    <property type="term" value="F:glucose-1-phosphate adenylyltransferase activity"/>
    <property type="evidence" value="ECO:0007669"/>
    <property type="project" value="UniProtKB-UniRule"/>
</dbReference>
<dbReference type="GO" id="GO:0005978">
    <property type="term" value="P:glycogen biosynthetic process"/>
    <property type="evidence" value="ECO:0007669"/>
    <property type="project" value="UniProtKB-UniRule"/>
</dbReference>
<dbReference type="CDD" id="cd02508">
    <property type="entry name" value="ADP_Glucose_PP"/>
    <property type="match status" value="1"/>
</dbReference>
<dbReference type="CDD" id="cd04651">
    <property type="entry name" value="LbH_G1P_AT_C"/>
    <property type="match status" value="1"/>
</dbReference>
<dbReference type="Gene3D" id="2.160.10.10">
    <property type="entry name" value="Hexapeptide repeat proteins"/>
    <property type="match status" value="1"/>
</dbReference>
<dbReference type="Gene3D" id="3.90.550.10">
    <property type="entry name" value="Spore Coat Polysaccharide Biosynthesis Protein SpsA, Chain A"/>
    <property type="match status" value="1"/>
</dbReference>
<dbReference type="HAMAP" id="MF_00624">
    <property type="entry name" value="GlgC"/>
    <property type="match status" value="1"/>
</dbReference>
<dbReference type="InterPro" id="IPR011831">
    <property type="entry name" value="ADP-Glc_PPase"/>
</dbReference>
<dbReference type="InterPro" id="IPR005836">
    <property type="entry name" value="ADP_Glu_pyroP_CS"/>
</dbReference>
<dbReference type="InterPro" id="IPR023049">
    <property type="entry name" value="GlgC_bac"/>
</dbReference>
<dbReference type="InterPro" id="IPR056818">
    <property type="entry name" value="GlmU/GlgC-like_hexapep"/>
</dbReference>
<dbReference type="InterPro" id="IPR005835">
    <property type="entry name" value="NTP_transferase_dom"/>
</dbReference>
<dbReference type="InterPro" id="IPR029044">
    <property type="entry name" value="Nucleotide-diphossugar_trans"/>
</dbReference>
<dbReference type="InterPro" id="IPR011004">
    <property type="entry name" value="Trimer_LpxA-like_sf"/>
</dbReference>
<dbReference type="NCBIfam" id="TIGR02091">
    <property type="entry name" value="glgC"/>
    <property type="match status" value="1"/>
</dbReference>
<dbReference type="NCBIfam" id="NF001947">
    <property type="entry name" value="PRK00725.1"/>
    <property type="match status" value="1"/>
</dbReference>
<dbReference type="NCBIfam" id="NF002023">
    <property type="entry name" value="PRK00844.1"/>
    <property type="match status" value="1"/>
</dbReference>
<dbReference type="PANTHER" id="PTHR43523:SF2">
    <property type="entry name" value="GLUCOSE-1-PHOSPHATE ADENYLYLTRANSFERASE"/>
    <property type="match status" value="1"/>
</dbReference>
<dbReference type="PANTHER" id="PTHR43523">
    <property type="entry name" value="GLUCOSE-1-PHOSPHATE ADENYLYLTRANSFERASE-RELATED"/>
    <property type="match status" value="1"/>
</dbReference>
<dbReference type="Pfam" id="PF24894">
    <property type="entry name" value="Hexapep_GlmU"/>
    <property type="match status" value="1"/>
</dbReference>
<dbReference type="Pfam" id="PF00483">
    <property type="entry name" value="NTP_transferase"/>
    <property type="match status" value="1"/>
</dbReference>
<dbReference type="SUPFAM" id="SSF53448">
    <property type="entry name" value="Nucleotide-diphospho-sugar transferases"/>
    <property type="match status" value="1"/>
</dbReference>
<dbReference type="SUPFAM" id="SSF51161">
    <property type="entry name" value="Trimeric LpxA-like enzymes"/>
    <property type="match status" value="1"/>
</dbReference>
<dbReference type="PROSITE" id="PS00808">
    <property type="entry name" value="ADP_GLC_PYROPHOSPH_1"/>
    <property type="match status" value="1"/>
</dbReference>
<dbReference type="PROSITE" id="PS00809">
    <property type="entry name" value="ADP_GLC_PYROPHOSPH_2"/>
    <property type="match status" value="1"/>
</dbReference>
<sequence length="433" mass="48869">MKVQPAVQTNDNPRFVSTLTRNTLALILAGGRGTRLKNLTDWRAKPAVPFGGKFRIIDFTLSNCVNSGVRRIGVVTQYKAQSLIRHIQRGWSFLDGRFQEFIELLPAQQRTEEGTWYQGTADAVFQNLDILRTHNPGYVLILGGDHIYKMDYGRILAEHVERQADLTIACLEVPVEDASAFGVMAVDDSWRTTSFAEKPEHPAPIPGKPGHALISMGIYVFNAKFLYEQLIQDHDMDQSSHDFGKDVIPRLVASNARVYAHRFQNSCVNMASGVPYWRDVGTVDAYWKANIDLTTITPDLNLYDEDWPIWTHQEQLPPAKFVFDDDDRRGQALDSMVSGGCIISGATVRRSLLFSNVQIRGYSTIEDSVILPNVSIDRHAYLKRVVVEKECQIPEGLKVGFNPDEDRKHFYVTDDGITLITPEMLGQGIHYIR</sequence>
<accession>Q82T88</accession>
<keyword id="KW-0067">ATP-binding</keyword>
<keyword id="KW-0119">Carbohydrate metabolism</keyword>
<keyword id="KW-0320">Glycogen biosynthesis</keyword>
<keyword id="KW-0321">Glycogen metabolism</keyword>
<keyword id="KW-0547">Nucleotide-binding</keyword>
<keyword id="KW-0548">Nucleotidyltransferase</keyword>
<keyword id="KW-1185">Reference proteome</keyword>
<keyword id="KW-0808">Transferase</keyword>
<reference key="1">
    <citation type="journal article" date="2003" name="J. Bacteriol.">
        <title>Complete genome sequence of the ammonia-oxidizing bacterium and obligate chemolithoautotroph Nitrosomonas europaea.</title>
        <authorList>
            <person name="Chain P."/>
            <person name="Lamerdin J.E."/>
            <person name="Larimer F.W."/>
            <person name="Regala W."/>
            <person name="Lao V."/>
            <person name="Land M.L."/>
            <person name="Hauser L."/>
            <person name="Hooper A.B."/>
            <person name="Klotz M.G."/>
            <person name="Norton J."/>
            <person name="Sayavedra-Soto L.A."/>
            <person name="Arciero D.M."/>
            <person name="Hommes N.G."/>
            <person name="Whittaker M.M."/>
            <person name="Arp D.J."/>
        </authorList>
    </citation>
    <scope>NUCLEOTIDE SEQUENCE [LARGE SCALE GENOMIC DNA]</scope>
    <source>
        <strain>ATCC 19718 / CIP 103999 / KCTC 2705 / NBRC 14298</strain>
    </source>
</reference>
<organism>
    <name type="scientific">Nitrosomonas europaea (strain ATCC 19718 / CIP 103999 / KCTC 2705 / NBRC 14298)</name>
    <dbReference type="NCBI Taxonomy" id="228410"/>
    <lineage>
        <taxon>Bacteria</taxon>
        <taxon>Pseudomonadati</taxon>
        <taxon>Pseudomonadota</taxon>
        <taxon>Betaproteobacteria</taxon>
        <taxon>Nitrosomonadales</taxon>
        <taxon>Nitrosomonadaceae</taxon>
        <taxon>Nitrosomonas</taxon>
    </lineage>
</organism>
<proteinExistence type="inferred from homology"/>
<evidence type="ECO:0000255" key="1">
    <source>
        <dbReference type="HAMAP-Rule" id="MF_00624"/>
    </source>
</evidence>